<proteinExistence type="inferred from homology"/>
<accession>Q0T4E8</accession>
<feature type="chain" id="PRO_1000013614" description="Ion-translocating oxidoreductase complex subunit C">
    <location>
        <begin position="1"/>
        <end position="740"/>
    </location>
</feature>
<feature type="domain" description="4Fe-4S ferredoxin-type 1" evidence="1">
    <location>
        <begin position="369"/>
        <end position="397"/>
    </location>
</feature>
<feature type="domain" description="4Fe-4S ferredoxin-type 2" evidence="1">
    <location>
        <begin position="407"/>
        <end position="436"/>
    </location>
</feature>
<feature type="region of interest" description="Disordered" evidence="2">
    <location>
        <begin position="598"/>
        <end position="716"/>
    </location>
</feature>
<feature type="binding site" evidence="1">
    <location>
        <position position="377"/>
    </location>
    <ligand>
        <name>[4Fe-4S] cluster</name>
        <dbReference type="ChEBI" id="CHEBI:49883"/>
        <label>1</label>
    </ligand>
</feature>
<feature type="binding site" evidence="1">
    <location>
        <position position="380"/>
    </location>
    <ligand>
        <name>[4Fe-4S] cluster</name>
        <dbReference type="ChEBI" id="CHEBI:49883"/>
        <label>1</label>
    </ligand>
</feature>
<feature type="binding site" evidence="1">
    <location>
        <position position="383"/>
    </location>
    <ligand>
        <name>[4Fe-4S] cluster</name>
        <dbReference type="ChEBI" id="CHEBI:49883"/>
        <label>1</label>
    </ligand>
</feature>
<feature type="binding site" evidence="1">
    <location>
        <position position="387"/>
    </location>
    <ligand>
        <name>[4Fe-4S] cluster</name>
        <dbReference type="ChEBI" id="CHEBI:49883"/>
        <label>2</label>
    </ligand>
</feature>
<feature type="binding site" evidence="1">
    <location>
        <position position="416"/>
    </location>
    <ligand>
        <name>[4Fe-4S] cluster</name>
        <dbReference type="ChEBI" id="CHEBI:49883"/>
        <label>2</label>
    </ligand>
</feature>
<feature type="binding site" evidence="1">
    <location>
        <position position="419"/>
    </location>
    <ligand>
        <name>[4Fe-4S] cluster</name>
        <dbReference type="ChEBI" id="CHEBI:49883"/>
        <label>2</label>
    </ligand>
</feature>
<feature type="binding site" evidence="1">
    <location>
        <position position="422"/>
    </location>
    <ligand>
        <name>[4Fe-4S] cluster</name>
        <dbReference type="ChEBI" id="CHEBI:49883"/>
        <label>2</label>
    </ligand>
</feature>
<feature type="binding site" evidence="1">
    <location>
        <position position="426"/>
    </location>
    <ligand>
        <name>[4Fe-4S] cluster</name>
        <dbReference type="ChEBI" id="CHEBI:49883"/>
        <label>1</label>
    </ligand>
</feature>
<organism>
    <name type="scientific">Shigella flexneri serotype 5b (strain 8401)</name>
    <dbReference type="NCBI Taxonomy" id="373384"/>
    <lineage>
        <taxon>Bacteria</taxon>
        <taxon>Pseudomonadati</taxon>
        <taxon>Pseudomonadota</taxon>
        <taxon>Gammaproteobacteria</taxon>
        <taxon>Enterobacterales</taxon>
        <taxon>Enterobacteriaceae</taxon>
        <taxon>Shigella</taxon>
    </lineage>
</organism>
<evidence type="ECO:0000255" key="1">
    <source>
        <dbReference type="HAMAP-Rule" id="MF_00461"/>
    </source>
</evidence>
<evidence type="ECO:0000256" key="2">
    <source>
        <dbReference type="SAM" id="MobiDB-lite"/>
    </source>
</evidence>
<dbReference type="EC" id="7.-.-.-" evidence="1"/>
<dbReference type="EMBL" id="CP000266">
    <property type="protein sequence ID" value="ABF03817.1"/>
    <property type="molecule type" value="Genomic_DNA"/>
</dbReference>
<dbReference type="RefSeq" id="WP_000915842.1">
    <property type="nucleotide sequence ID" value="NC_008258.1"/>
</dbReference>
<dbReference type="SMR" id="Q0T4E8"/>
<dbReference type="KEGG" id="sfv:SFV_1646"/>
<dbReference type="HOGENOM" id="CLU_010808_2_1_6"/>
<dbReference type="Proteomes" id="UP000000659">
    <property type="component" value="Chromosome"/>
</dbReference>
<dbReference type="GO" id="GO:0005886">
    <property type="term" value="C:plasma membrane"/>
    <property type="evidence" value="ECO:0007669"/>
    <property type="project" value="UniProtKB-SubCell"/>
</dbReference>
<dbReference type="GO" id="GO:0051539">
    <property type="term" value="F:4 iron, 4 sulfur cluster binding"/>
    <property type="evidence" value="ECO:0007669"/>
    <property type="project" value="UniProtKB-KW"/>
</dbReference>
<dbReference type="GO" id="GO:0009055">
    <property type="term" value="F:electron transfer activity"/>
    <property type="evidence" value="ECO:0007669"/>
    <property type="project" value="InterPro"/>
</dbReference>
<dbReference type="GO" id="GO:0046872">
    <property type="term" value="F:metal ion binding"/>
    <property type="evidence" value="ECO:0007669"/>
    <property type="project" value="UniProtKB-KW"/>
</dbReference>
<dbReference type="GO" id="GO:0022900">
    <property type="term" value="P:electron transport chain"/>
    <property type="evidence" value="ECO:0007669"/>
    <property type="project" value="UniProtKB-UniRule"/>
</dbReference>
<dbReference type="Gene3D" id="3.30.70.20">
    <property type="match status" value="1"/>
</dbReference>
<dbReference type="Gene3D" id="3.40.50.11540">
    <property type="entry name" value="NADH-ubiquinone oxidoreductase 51kDa subunit"/>
    <property type="match status" value="1"/>
</dbReference>
<dbReference type="HAMAP" id="MF_00461">
    <property type="entry name" value="RsxC_RnfC"/>
    <property type="match status" value="1"/>
</dbReference>
<dbReference type="InterPro" id="IPR017896">
    <property type="entry name" value="4Fe4S_Fe-S-bd"/>
</dbReference>
<dbReference type="InterPro" id="IPR017900">
    <property type="entry name" value="4Fe4S_Fe_S_CS"/>
</dbReference>
<dbReference type="InterPro" id="IPR010208">
    <property type="entry name" value="Ion_transpt_RnfC/RsxC"/>
</dbReference>
<dbReference type="InterPro" id="IPR011538">
    <property type="entry name" value="Nuo51_FMN-bd"/>
</dbReference>
<dbReference type="InterPro" id="IPR037225">
    <property type="entry name" value="Nuo51_FMN-bd_sf"/>
</dbReference>
<dbReference type="InterPro" id="IPR026902">
    <property type="entry name" value="RnfC_N"/>
</dbReference>
<dbReference type="InterPro" id="IPR019554">
    <property type="entry name" value="Soluble_ligand-bd"/>
</dbReference>
<dbReference type="NCBIfam" id="NF003454">
    <property type="entry name" value="PRK05035.1"/>
    <property type="match status" value="1"/>
</dbReference>
<dbReference type="NCBIfam" id="TIGR01945">
    <property type="entry name" value="rnfC"/>
    <property type="match status" value="1"/>
</dbReference>
<dbReference type="PANTHER" id="PTHR43034">
    <property type="entry name" value="ION-TRANSLOCATING OXIDOREDUCTASE COMPLEX SUBUNIT C"/>
    <property type="match status" value="1"/>
</dbReference>
<dbReference type="PANTHER" id="PTHR43034:SF2">
    <property type="entry name" value="ION-TRANSLOCATING OXIDOREDUCTASE COMPLEX SUBUNIT C"/>
    <property type="match status" value="1"/>
</dbReference>
<dbReference type="Pfam" id="PF01512">
    <property type="entry name" value="Complex1_51K"/>
    <property type="match status" value="1"/>
</dbReference>
<dbReference type="Pfam" id="PF12838">
    <property type="entry name" value="Fer4_7"/>
    <property type="match status" value="1"/>
</dbReference>
<dbReference type="Pfam" id="PF13375">
    <property type="entry name" value="RnfC_N"/>
    <property type="match status" value="1"/>
</dbReference>
<dbReference type="Pfam" id="PF10531">
    <property type="entry name" value="SLBB"/>
    <property type="match status" value="1"/>
</dbReference>
<dbReference type="SUPFAM" id="SSF46548">
    <property type="entry name" value="alpha-helical ferredoxin"/>
    <property type="match status" value="1"/>
</dbReference>
<dbReference type="SUPFAM" id="SSF142019">
    <property type="entry name" value="Nqo1 FMN-binding domain-like"/>
    <property type="match status" value="1"/>
</dbReference>
<dbReference type="PROSITE" id="PS00198">
    <property type="entry name" value="4FE4S_FER_1"/>
    <property type="match status" value="2"/>
</dbReference>
<dbReference type="PROSITE" id="PS51379">
    <property type="entry name" value="4FE4S_FER_2"/>
    <property type="match status" value="2"/>
</dbReference>
<keyword id="KW-0004">4Fe-4S</keyword>
<keyword id="KW-0997">Cell inner membrane</keyword>
<keyword id="KW-1003">Cell membrane</keyword>
<keyword id="KW-0249">Electron transport</keyword>
<keyword id="KW-0408">Iron</keyword>
<keyword id="KW-0411">Iron-sulfur</keyword>
<keyword id="KW-0472">Membrane</keyword>
<keyword id="KW-0479">Metal-binding</keyword>
<keyword id="KW-0677">Repeat</keyword>
<keyword id="KW-1278">Translocase</keyword>
<keyword id="KW-0813">Transport</keyword>
<gene>
    <name evidence="1" type="primary">rsxC</name>
    <name type="ordered locus">SFV_1646</name>
</gene>
<reference key="1">
    <citation type="journal article" date="2006" name="BMC Genomics">
        <title>Complete genome sequence of Shigella flexneri 5b and comparison with Shigella flexneri 2a.</title>
        <authorList>
            <person name="Nie H."/>
            <person name="Yang F."/>
            <person name="Zhang X."/>
            <person name="Yang J."/>
            <person name="Chen L."/>
            <person name="Wang J."/>
            <person name="Xiong Z."/>
            <person name="Peng J."/>
            <person name="Sun L."/>
            <person name="Dong J."/>
            <person name="Xue Y."/>
            <person name="Xu X."/>
            <person name="Chen S."/>
            <person name="Yao Z."/>
            <person name="Shen Y."/>
            <person name="Jin Q."/>
        </authorList>
    </citation>
    <scope>NUCLEOTIDE SEQUENCE [LARGE SCALE GENOMIC DNA]</scope>
    <source>
        <strain>8401</strain>
    </source>
</reference>
<comment type="function">
    <text evidence="1">Part of a membrane-bound complex that couples electron transfer with translocation of ions across the membrane. Required to maintain the reduced state of SoxR.</text>
</comment>
<comment type="cofactor">
    <cofactor evidence="1">
        <name>[4Fe-4S] cluster</name>
        <dbReference type="ChEBI" id="CHEBI:49883"/>
    </cofactor>
    <text evidence="1">Binds 2 [4Fe-4S] clusters per subunit.</text>
</comment>
<comment type="subunit">
    <text evidence="1">The complex is composed of six subunits: RsxA, RsxB, RsxC, RsxD, RsxE and RsxG.</text>
</comment>
<comment type="subcellular location">
    <subcellularLocation>
        <location evidence="1">Cell inner membrane</location>
        <topology evidence="1">Peripheral membrane protein</topology>
    </subcellularLocation>
</comment>
<comment type="similarity">
    <text evidence="1">Belongs to the 4Fe4S bacterial-type ferredoxin family. RnfC subfamily.</text>
</comment>
<name>RSXC_SHIF8</name>
<protein>
    <recommendedName>
        <fullName evidence="1">Ion-translocating oxidoreductase complex subunit C</fullName>
        <ecNumber evidence="1">7.-.-.-</ecNumber>
    </recommendedName>
    <alternativeName>
        <fullName evidence="1">Rsx electron transport complex subunit C</fullName>
    </alternativeName>
</protein>
<sequence>MLKLFSAFRKNKIWDFNGGIHPPEMKTQTNGTPLRQVLLAQHFVIPLKQHIGAEGELCVSVGDKVLRGQPLTRGRGKMLPVHAPTSGTVTAIAPHSTAHPSALAELSVIIDADGEDCWIPRDGWVDYRSRSREELIERIHQFGVAGLGGAGFPTGVKLQGGGDKIETLIINAAECEPYITADDRLMQDCAAQVVEGIRILAHILQPREILIGIEDNKPQAISMLRAVLADSNDISLRVIPTKYPSGGAKQLTYILTGKQVPHGGRSSDIGVLMQNVGTAYAVKRAVIDGEPITERVVTLTGEAIARPGNVWARLGTPVRHLLNDAGFCPSADQMVIMGGPLMGFTLPWLDVPVVKITNCLLAPSANELGEPQEEQSCIRCSACADACPVDLLPQQLYWFSKGQQHDKATTHNIADCIECGACAWVCPSNIPLVQYFRQEKAEIAAIRQEEKRAAEAKARFEARQARLEREKATRLERHKSAAVQPAAKDKDAIAAALARVKEKQAQATQPIVIKAGERPDNSAIIAEREARKAQARAKQAELEQTNDAATVAEPRKTAVEAAIARSKARKLEQQQANAEPEEQVDPRKAAVEAAIARAKARKLEQQQANAEPEEQVDPRKAAVEAAIARAKARKLEQQQANAEPEEQVDPRKAAVEAAIARAKARKLEQQQANAEPEEQVDPRKAAVEAAIARAKARKLEQQQANAEPEEQVDPRKAAVAAAIARVQAKKAAQQKVVNED</sequence>